<accession>Q6F0V4</accession>
<reference key="1">
    <citation type="submission" date="2004-06" db="EMBL/GenBank/DDBJ databases">
        <authorList>
            <person name="Birren B.W."/>
            <person name="Stange-Thomann N."/>
            <person name="Hafez N."/>
            <person name="DeCaprio D."/>
            <person name="Fisher S."/>
            <person name="Butler J."/>
            <person name="Elkins T."/>
            <person name="Kodira C.D."/>
            <person name="Major J."/>
            <person name="Wang S."/>
            <person name="Nicol R."/>
            <person name="Nusbaum C."/>
        </authorList>
    </citation>
    <scope>NUCLEOTIDE SEQUENCE [LARGE SCALE GENOMIC DNA]</scope>
    <source>
        <strain>ATCC 33453 / NBRC 100688 / NCTC 11704 / L1</strain>
    </source>
</reference>
<name>POTA_MESFL</name>
<dbReference type="EC" id="7.6.2.11" evidence="1"/>
<dbReference type="EMBL" id="AE017263">
    <property type="protein sequence ID" value="AAT75869.1"/>
    <property type="molecule type" value="Genomic_DNA"/>
</dbReference>
<dbReference type="RefSeq" id="WP_011183409.1">
    <property type="nucleotide sequence ID" value="NC_006055.1"/>
</dbReference>
<dbReference type="RefSeq" id="YP_053753.1">
    <property type="nucleotide sequence ID" value="NC_006055.1"/>
</dbReference>
<dbReference type="SMR" id="Q6F0V4"/>
<dbReference type="STRING" id="265311.Mfl511"/>
<dbReference type="PaxDb" id="265311-Mfl511"/>
<dbReference type="EnsemblBacteria" id="AAT75869">
    <property type="protein sequence ID" value="AAT75869"/>
    <property type="gene ID" value="Mfl511"/>
</dbReference>
<dbReference type="GeneID" id="2897903"/>
<dbReference type="KEGG" id="mfl:Mfl511"/>
<dbReference type="PATRIC" id="fig|265311.5.peg.516"/>
<dbReference type="eggNOG" id="COG3842">
    <property type="taxonomic scope" value="Bacteria"/>
</dbReference>
<dbReference type="HOGENOM" id="CLU_000604_1_1_14"/>
<dbReference type="OrthoDB" id="9802264at2"/>
<dbReference type="Proteomes" id="UP000006647">
    <property type="component" value="Chromosome"/>
</dbReference>
<dbReference type="GO" id="GO:0043190">
    <property type="term" value="C:ATP-binding cassette (ABC) transporter complex"/>
    <property type="evidence" value="ECO:0007669"/>
    <property type="project" value="InterPro"/>
</dbReference>
<dbReference type="GO" id="GO:0015594">
    <property type="term" value="F:ABC-type putrescine transporter activity"/>
    <property type="evidence" value="ECO:0007669"/>
    <property type="project" value="InterPro"/>
</dbReference>
<dbReference type="GO" id="GO:0005524">
    <property type="term" value="F:ATP binding"/>
    <property type="evidence" value="ECO:0007669"/>
    <property type="project" value="UniProtKB-KW"/>
</dbReference>
<dbReference type="GO" id="GO:0016887">
    <property type="term" value="F:ATP hydrolysis activity"/>
    <property type="evidence" value="ECO:0007669"/>
    <property type="project" value="InterPro"/>
</dbReference>
<dbReference type="CDD" id="cd03300">
    <property type="entry name" value="ABC_PotA_N"/>
    <property type="match status" value="1"/>
</dbReference>
<dbReference type="FunFam" id="3.40.50.300:FF:000133">
    <property type="entry name" value="Spermidine/putrescine import ATP-binding protein PotA"/>
    <property type="match status" value="1"/>
</dbReference>
<dbReference type="Gene3D" id="2.40.50.100">
    <property type="match status" value="1"/>
</dbReference>
<dbReference type="Gene3D" id="3.40.50.300">
    <property type="entry name" value="P-loop containing nucleotide triphosphate hydrolases"/>
    <property type="match status" value="1"/>
</dbReference>
<dbReference type="InterPro" id="IPR003593">
    <property type="entry name" value="AAA+_ATPase"/>
</dbReference>
<dbReference type="InterPro" id="IPR050093">
    <property type="entry name" value="ABC_SmlMolc_Importer"/>
</dbReference>
<dbReference type="InterPro" id="IPR003439">
    <property type="entry name" value="ABC_transporter-like_ATP-bd"/>
</dbReference>
<dbReference type="InterPro" id="IPR017871">
    <property type="entry name" value="ABC_transporter-like_CS"/>
</dbReference>
<dbReference type="InterPro" id="IPR008995">
    <property type="entry name" value="Mo/tungstate-bd_C_term_dom"/>
</dbReference>
<dbReference type="InterPro" id="IPR027417">
    <property type="entry name" value="P-loop_NTPase"/>
</dbReference>
<dbReference type="InterPro" id="IPR017879">
    <property type="entry name" value="PotA_ATP-bd"/>
</dbReference>
<dbReference type="InterPro" id="IPR013611">
    <property type="entry name" value="Transp-assoc_OB_typ2"/>
</dbReference>
<dbReference type="NCBIfam" id="NF043075">
    <property type="entry name" value="MMSYN1_0197"/>
    <property type="match status" value="1"/>
</dbReference>
<dbReference type="PANTHER" id="PTHR42781">
    <property type="entry name" value="SPERMIDINE/PUTRESCINE IMPORT ATP-BINDING PROTEIN POTA"/>
    <property type="match status" value="1"/>
</dbReference>
<dbReference type="PANTHER" id="PTHR42781:SF4">
    <property type="entry name" value="SPERMIDINE_PUTRESCINE IMPORT ATP-BINDING PROTEIN POTA"/>
    <property type="match status" value="1"/>
</dbReference>
<dbReference type="Pfam" id="PF00005">
    <property type="entry name" value="ABC_tran"/>
    <property type="match status" value="1"/>
</dbReference>
<dbReference type="Pfam" id="PF08402">
    <property type="entry name" value="TOBE_2"/>
    <property type="match status" value="1"/>
</dbReference>
<dbReference type="SMART" id="SM00382">
    <property type="entry name" value="AAA"/>
    <property type="match status" value="1"/>
</dbReference>
<dbReference type="SUPFAM" id="SSF50331">
    <property type="entry name" value="MOP-like"/>
    <property type="match status" value="1"/>
</dbReference>
<dbReference type="SUPFAM" id="SSF52540">
    <property type="entry name" value="P-loop containing nucleoside triphosphate hydrolases"/>
    <property type="match status" value="1"/>
</dbReference>
<dbReference type="PROSITE" id="PS00211">
    <property type="entry name" value="ABC_TRANSPORTER_1"/>
    <property type="match status" value="1"/>
</dbReference>
<dbReference type="PROSITE" id="PS50893">
    <property type="entry name" value="ABC_TRANSPORTER_2"/>
    <property type="match status" value="1"/>
</dbReference>
<dbReference type="PROSITE" id="PS51305">
    <property type="entry name" value="POTA"/>
    <property type="match status" value="1"/>
</dbReference>
<protein>
    <recommendedName>
        <fullName evidence="1">Spermidine/putrescine import ATP-binding protein PotA</fullName>
        <ecNumber evidence="1">7.6.2.11</ecNumber>
    </recommendedName>
</protein>
<sequence>MENNILELRNVTKDYDGKVVLKGIDLNIKEGEFITLLGPSGCGKTTTLRIVAGFEKPNSGQIMFEGKDLLPIPINKRQFNTIFQSYALFPHLNVFDNIAFGLRTKKTKKDILQREVLKQIRQVGLEGFEDRNINDLSGGQKQRVAIARALVMKPKVLLLDEPLAALDVQLRQHMREELKRLQREIGITFLMVSHDQEEALSISDRVVVMNEGSIQQIGTPEDIYNEPENLWVAKFIGQSNIIEDGIFIEDNKVQIDGKTFVCDDTNFGENEKSIDIVIRPEDIEIKKTNAGFFNGTVMHTTFKGVHWELLVETTKKRIWKIHTTQAFKVDDKVSIKWNDEAIHVMWKEVE</sequence>
<gene>
    <name evidence="1" type="primary">potA</name>
    <name type="ordered locus">Mfl511</name>
</gene>
<proteinExistence type="inferred from homology"/>
<comment type="function">
    <text evidence="1">Part of the ABC transporter complex PotABCD involved in spermidine/putrescine import. Responsible for energy coupling to the transport system.</text>
</comment>
<comment type="catalytic activity">
    <reaction evidence="1">
        <text>ATP + H2O + polyamine-[polyamine-binding protein]Side 1 = ADP + phosphate + polyamineSide 2 + [polyamine-binding protein]Side 1.</text>
        <dbReference type="EC" id="7.6.2.11"/>
    </reaction>
</comment>
<comment type="subunit">
    <text evidence="1">The complex is composed of two ATP-binding proteins (PotA), two transmembrane proteins (PotB and PotC) and a solute-binding protein (PotD).</text>
</comment>
<comment type="subcellular location">
    <subcellularLocation>
        <location evidence="1">Cell membrane</location>
        <topology evidence="1">Peripheral membrane protein</topology>
    </subcellularLocation>
</comment>
<comment type="similarity">
    <text evidence="1">Belongs to the ABC transporter superfamily. Spermidine/putrescine importer (TC 3.A.1.11.1) family.</text>
</comment>
<organism>
    <name type="scientific">Mesoplasma florum (strain ATCC 33453 / NBRC 100688 / NCTC 11704 / L1)</name>
    <name type="common">Acholeplasma florum</name>
    <dbReference type="NCBI Taxonomy" id="265311"/>
    <lineage>
        <taxon>Bacteria</taxon>
        <taxon>Bacillati</taxon>
        <taxon>Mycoplasmatota</taxon>
        <taxon>Mollicutes</taxon>
        <taxon>Entomoplasmatales</taxon>
        <taxon>Entomoplasmataceae</taxon>
        <taxon>Mesoplasma</taxon>
    </lineage>
</organism>
<evidence type="ECO:0000255" key="1">
    <source>
        <dbReference type="HAMAP-Rule" id="MF_01726"/>
    </source>
</evidence>
<feature type="chain" id="PRO_0000286249" description="Spermidine/putrescine import ATP-binding protein PotA">
    <location>
        <begin position="1"/>
        <end position="350"/>
    </location>
</feature>
<feature type="domain" description="ABC transporter" evidence="1">
    <location>
        <begin position="6"/>
        <end position="236"/>
    </location>
</feature>
<feature type="binding site" evidence="1">
    <location>
        <begin position="38"/>
        <end position="45"/>
    </location>
    <ligand>
        <name>ATP</name>
        <dbReference type="ChEBI" id="CHEBI:30616"/>
    </ligand>
</feature>
<keyword id="KW-0067">ATP-binding</keyword>
<keyword id="KW-1003">Cell membrane</keyword>
<keyword id="KW-0472">Membrane</keyword>
<keyword id="KW-0547">Nucleotide-binding</keyword>
<keyword id="KW-1185">Reference proteome</keyword>
<keyword id="KW-1278">Translocase</keyword>
<keyword id="KW-0813">Transport</keyword>